<proteinExistence type="inferred from homology"/>
<accession>Q3ZBD4</accession>
<keyword id="KW-1185">Reference proteome</keyword>
<dbReference type="EMBL" id="BC103433">
    <property type="protein sequence ID" value="AAI03434.1"/>
    <property type="molecule type" value="mRNA"/>
</dbReference>
<dbReference type="RefSeq" id="NP_001032715.1">
    <property type="nucleotide sequence ID" value="NM_001037626.1"/>
</dbReference>
<dbReference type="FunCoup" id="Q3ZBD4">
    <property type="interactions" value="61"/>
</dbReference>
<dbReference type="STRING" id="9913.ENSBTAP00000020229"/>
<dbReference type="PaxDb" id="9913-ENSBTAP00000020229"/>
<dbReference type="PeptideAtlas" id="Q3ZBD4"/>
<dbReference type="GeneID" id="615975"/>
<dbReference type="KEGG" id="bta:615975"/>
<dbReference type="CTD" id="23676"/>
<dbReference type="VEuPathDB" id="HostDB:ENSBTAG00000015204"/>
<dbReference type="eggNOG" id="ENOG502S62J">
    <property type="taxonomic scope" value="Eukaryota"/>
</dbReference>
<dbReference type="HOGENOM" id="CLU_2512070_0_0_1"/>
<dbReference type="InParanoid" id="Q3ZBD4"/>
<dbReference type="OMA" id="PPRKKEC"/>
<dbReference type="OrthoDB" id="8868927at2759"/>
<dbReference type="TreeFam" id="TF338181"/>
<dbReference type="Proteomes" id="UP000009136">
    <property type="component" value="Chromosome X"/>
</dbReference>
<dbReference type="Bgee" id="ENSBTAG00000015204">
    <property type="expression patterns" value="Expressed in tongue muscle and 76 other cell types or tissues"/>
</dbReference>
<dbReference type="GO" id="GO:0043034">
    <property type="term" value="C:costamere"/>
    <property type="evidence" value="ECO:0000318"/>
    <property type="project" value="GO_Central"/>
</dbReference>
<dbReference type="GO" id="GO:0031430">
    <property type="term" value="C:M band"/>
    <property type="evidence" value="ECO:0000318"/>
    <property type="project" value="GO_Central"/>
</dbReference>
<dbReference type="GO" id="GO:0005927">
    <property type="term" value="C:muscle tendon junction"/>
    <property type="evidence" value="ECO:0000318"/>
    <property type="project" value="GO_Central"/>
</dbReference>
<dbReference type="InterPro" id="IPR029268">
    <property type="entry name" value="Chisel"/>
</dbReference>
<dbReference type="PANTHER" id="PTHR17416">
    <property type="entry name" value="SMALL MUSCULAR PROTEIN"/>
    <property type="match status" value="1"/>
</dbReference>
<dbReference type="PANTHER" id="PTHR17416:SF0">
    <property type="entry name" value="SMALL MUSCULAR PROTEIN"/>
    <property type="match status" value="1"/>
</dbReference>
<dbReference type="Pfam" id="PF15355">
    <property type="entry name" value="Chisel"/>
    <property type="match status" value="1"/>
</dbReference>
<organism>
    <name type="scientific">Bos taurus</name>
    <name type="common">Bovine</name>
    <dbReference type="NCBI Taxonomy" id="9913"/>
    <lineage>
        <taxon>Eukaryota</taxon>
        <taxon>Metazoa</taxon>
        <taxon>Chordata</taxon>
        <taxon>Craniata</taxon>
        <taxon>Vertebrata</taxon>
        <taxon>Euteleostomi</taxon>
        <taxon>Mammalia</taxon>
        <taxon>Eutheria</taxon>
        <taxon>Laurasiatheria</taxon>
        <taxon>Artiodactyla</taxon>
        <taxon>Ruminantia</taxon>
        <taxon>Pecora</taxon>
        <taxon>Bovidae</taxon>
        <taxon>Bovinae</taxon>
        <taxon>Bos</taxon>
    </lineage>
</organism>
<protein>
    <recommendedName>
        <fullName>Small muscular protein</fullName>
    </recommendedName>
</protein>
<name>SMPX_BOVIN</name>
<reference key="1">
    <citation type="submission" date="2005-08" db="EMBL/GenBank/DDBJ databases">
        <authorList>
            <consortium name="NIH - Mammalian Gene Collection (MGC) project"/>
        </authorList>
    </citation>
    <scope>NUCLEOTIDE SEQUENCE [LARGE SCALE MRNA]</scope>
    <source>
        <strain>Hereford</strain>
        <tissue>Heart ventricle</tissue>
    </source>
</reference>
<sequence length="86" mass="9300">MSKQPVSNVRAIQANINIPMGAFRPGAGQPPRRKECTPEIEEGAPPTSDEEKKPIPGAKKLPGPAVNLSEIQNIKSELKYVPKAEQ</sequence>
<comment type="function">
    <text evidence="1">Plays a role in the regulatory network through which muscle cells coordinate their structural and functional states during growth, adaptation, and repair.</text>
</comment>
<comment type="similarity">
    <text evidence="3">Belongs to the SMPX family.</text>
</comment>
<feature type="chain" id="PRO_0000378197" description="Small muscular protein">
    <location>
        <begin position="1"/>
        <end position="86"/>
    </location>
</feature>
<feature type="region of interest" description="Disordered" evidence="2">
    <location>
        <begin position="20"/>
        <end position="64"/>
    </location>
</feature>
<gene>
    <name type="primary">SMPX</name>
</gene>
<evidence type="ECO:0000250" key="1"/>
<evidence type="ECO:0000256" key="2">
    <source>
        <dbReference type="SAM" id="MobiDB-lite"/>
    </source>
</evidence>
<evidence type="ECO:0000305" key="3"/>